<organism>
    <name type="scientific">Escherichia coli (strain SMS-3-5 / SECEC)</name>
    <dbReference type="NCBI Taxonomy" id="439855"/>
    <lineage>
        <taxon>Bacteria</taxon>
        <taxon>Pseudomonadati</taxon>
        <taxon>Pseudomonadota</taxon>
        <taxon>Gammaproteobacteria</taxon>
        <taxon>Enterobacterales</taxon>
        <taxon>Enterobacteriaceae</taxon>
        <taxon>Escherichia</taxon>
    </lineage>
</organism>
<protein>
    <recommendedName>
        <fullName evidence="1">Protein-L-isoaspartate O-methyltransferase</fullName>
        <ecNumber evidence="1">2.1.1.77</ecNumber>
    </recommendedName>
    <alternativeName>
        <fullName evidence="1">L-isoaspartyl protein carboxyl methyltransferase</fullName>
    </alternativeName>
    <alternativeName>
        <fullName evidence="1">Protein L-isoaspartyl methyltransferase</fullName>
    </alternativeName>
    <alternativeName>
        <fullName evidence="1">Protein-beta-aspartate methyltransferase</fullName>
        <shortName evidence="1">PIMT</shortName>
    </alternativeName>
</protein>
<gene>
    <name evidence="1" type="primary">pcm</name>
    <name type="ordered locus">EcSMS35_2868</name>
</gene>
<reference key="1">
    <citation type="journal article" date="2008" name="J. Bacteriol.">
        <title>Insights into the environmental resistance gene pool from the genome sequence of the multidrug-resistant environmental isolate Escherichia coli SMS-3-5.</title>
        <authorList>
            <person name="Fricke W.F."/>
            <person name="Wright M.S."/>
            <person name="Lindell A.H."/>
            <person name="Harkins D.M."/>
            <person name="Baker-Austin C."/>
            <person name="Ravel J."/>
            <person name="Stepanauskas R."/>
        </authorList>
    </citation>
    <scope>NUCLEOTIDE SEQUENCE [LARGE SCALE GENOMIC DNA]</scope>
    <source>
        <strain>SMS-3-5 / SECEC</strain>
    </source>
</reference>
<accession>B1LQ63</accession>
<comment type="function">
    <text evidence="1">Catalyzes the methyl esterification of L-isoaspartyl residues in peptides and proteins that result from spontaneous decomposition of normal L-aspartyl and L-asparaginyl residues. It plays a role in the repair and/or degradation of damaged proteins.</text>
</comment>
<comment type="catalytic activity">
    <reaction evidence="1">
        <text>[protein]-L-isoaspartate + S-adenosyl-L-methionine = [protein]-L-isoaspartate alpha-methyl ester + S-adenosyl-L-homocysteine</text>
        <dbReference type="Rhea" id="RHEA:12705"/>
        <dbReference type="Rhea" id="RHEA-COMP:12143"/>
        <dbReference type="Rhea" id="RHEA-COMP:12144"/>
        <dbReference type="ChEBI" id="CHEBI:57856"/>
        <dbReference type="ChEBI" id="CHEBI:59789"/>
        <dbReference type="ChEBI" id="CHEBI:90596"/>
        <dbReference type="ChEBI" id="CHEBI:90598"/>
        <dbReference type="EC" id="2.1.1.77"/>
    </reaction>
</comment>
<comment type="subcellular location">
    <subcellularLocation>
        <location evidence="1">Cytoplasm</location>
    </subcellularLocation>
</comment>
<comment type="similarity">
    <text evidence="1">Belongs to the methyltransferase superfamily. L-isoaspartyl/D-aspartyl protein methyltransferase family.</text>
</comment>
<proteinExistence type="inferred from homology"/>
<evidence type="ECO:0000255" key="1">
    <source>
        <dbReference type="HAMAP-Rule" id="MF_00090"/>
    </source>
</evidence>
<dbReference type="EC" id="2.1.1.77" evidence="1"/>
<dbReference type="EMBL" id="CP000970">
    <property type="protein sequence ID" value="ACB18056.1"/>
    <property type="molecule type" value="Genomic_DNA"/>
</dbReference>
<dbReference type="RefSeq" id="WP_000254708.1">
    <property type="nucleotide sequence ID" value="NC_010498.1"/>
</dbReference>
<dbReference type="SMR" id="B1LQ63"/>
<dbReference type="GeneID" id="93779263"/>
<dbReference type="KEGG" id="ecm:EcSMS35_2868"/>
<dbReference type="HOGENOM" id="CLU_055432_2_0_6"/>
<dbReference type="Proteomes" id="UP000007011">
    <property type="component" value="Chromosome"/>
</dbReference>
<dbReference type="GO" id="GO:0005737">
    <property type="term" value="C:cytoplasm"/>
    <property type="evidence" value="ECO:0007669"/>
    <property type="project" value="UniProtKB-SubCell"/>
</dbReference>
<dbReference type="GO" id="GO:0004719">
    <property type="term" value="F:protein-L-isoaspartate (D-aspartate) O-methyltransferase activity"/>
    <property type="evidence" value="ECO:0007669"/>
    <property type="project" value="UniProtKB-UniRule"/>
</dbReference>
<dbReference type="GO" id="GO:0032259">
    <property type="term" value="P:methylation"/>
    <property type="evidence" value="ECO:0007669"/>
    <property type="project" value="UniProtKB-KW"/>
</dbReference>
<dbReference type="GO" id="GO:0036211">
    <property type="term" value="P:protein modification process"/>
    <property type="evidence" value="ECO:0007669"/>
    <property type="project" value="UniProtKB-UniRule"/>
</dbReference>
<dbReference type="GO" id="GO:0030091">
    <property type="term" value="P:protein repair"/>
    <property type="evidence" value="ECO:0007669"/>
    <property type="project" value="UniProtKB-UniRule"/>
</dbReference>
<dbReference type="CDD" id="cd02440">
    <property type="entry name" value="AdoMet_MTases"/>
    <property type="match status" value="1"/>
</dbReference>
<dbReference type="FunFam" id="3.40.50.150:FF:000010">
    <property type="entry name" value="Protein-L-isoaspartate O-methyltransferase"/>
    <property type="match status" value="1"/>
</dbReference>
<dbReference type="Gene3D" id="3.40.50.150">
    <property type="entry name" value="Vaccinia Virus protein VP39"/>
    <property type="match status" value="1"/>
</dbReference>
<dbReference type="HAMAP" id="MF_00090">
    <property type="entry name" value="PIMT"/>
    <property type="match status" value="1"/>
</dbReference>
<dbReference type="InterPro" id="IPR000682">
    <property type="entry name" value="PCMT"/>
</dbReference>
<dbReference type="InterPro" id="IPR029063">
    <property type="entry name" value="SAM-dependent_MTases_sf"/>
</dbReference>
<dbReference type="NCBIfam" id="TIGR00080">
    <property type="entry name" value="pimt"/>
    <property type="match status" value="1"/>
</dbReference>
<dbReference type="NCBIfam" id="NF001453">
    <property type="entry name" value="PRK00312.1"/>
    <property type="match status" value="1"/>
</dbReference>
<dbReference type="PANTHER" id="PTHR11579">
    <property type="entry name" value="PROTEIN-L-ISOASPARTATE O-METHYLTRANSFERASE"/>
    <property type="match status" value="1"/>
</dbReference>
<dbReference type="PANTHER" id="PTHR11579:SF0">
    <property type="entry name" value="PROTEIN-L-ISOASPARTATE(D-ASPARTATE) O-METHYLTRANSFERASE"/>
    <property type="match status" value="1"/>
</dbReference>
<dbReference type="Pfam" id="PF01135">
    <property type="entry name" value="PCMT"/>
    <property type="match status" value="1"/>
</dbReference>
<dbReference type="SUPFAM" id="SSF53335">
    <property type="entry name" value="S-adenosyl-L-methionine-dependent methyltransferases"/>
    <property type="match status" value="1"/>
</dbReference>
<dbReference type="PROSITE" id="PS01279">
    <property type="entry name" value="PCMT"/>
    <property type="match status" value="1"/>
</dbReference>
<keyword id="KW-0963">Cytoplasm</keyword>
<keyword id="KW-0489">Methyltransferase</keyword>
<keyword id="KW-0949">S-adenosyl-L-methionine</keyword>
<keyword id="KW-0808">Transferase</keyword>
<feature type="chain" id="PRO_0000351857" description="Protein-L-isoaspartate O-methyltransferase">
    <location>
        <begin position="1"/>
        <end position="208"/>
    </location>
</feature>
<feature type="active site" evidence="1">
    <location>
        <position position="59"/>
    </location>
</feature>
<name>PIMT_ECOSM</name>
<sequence>MVSRRVQALLDQLRAQGIQDEQVLNALAAVPREKFVDEAFEQKAWDNIALPIGQGQTISQPYMVARMTELLELTPQSRVLEIGTGSGYQTAILAHLVQHVCSVERIKGLQWQARRRLKNLDLHNVSTRHGDGWQGWQARAPFDAIIVTAAPPEIPTALMTQLDEGGILVLPVGEEHQYLKRVRRRGGEFIIDTVEAVRFVPLVKGELA</sequence>